<keyword id="KW-0167">Capsid protein</keyword>
<keyword id="KW-0238">DNA-binding</keyword>
<keyword id="KW-1048">Host nucleus</keyword>
<keyword id="KW-0945">Host-virus interaction</keyword>
<keyword id="KW-0426">Late protein</keyword>
<keyword id="KW-1140">T=1 icosahedral capsid protein</keyword>
<keyword id="KW-1161">Viral attachment to host cell</keyword>
<keyword id="KW-1162">Viral penetration into host cytoplasm</keyword>
<keyword id="KW-1163">Viral penetration into host nucleus</keyword>
<keyword id="KW-0946">Virion</keyword>
<keyword id="KW-1164">Virus endocytosis by host</keyword>
<keyword id="KW-1160">Virus entry into host cell</keyword>
<feature type="chain" id="PRO_0000223001" description="Capsid protein">
    <location>
        <begin position="1"/>
        <end position="449"/>
    </location>
</feature>
<feature type="region of interest" description="DNA-binding" evidence="1">
    <location>
        <begin position="1"/>
        <end position="43"/>
    </location>
</feature>
<feature type="region of interest" description="Nuclear localization signals" evidence="2">
    <location>
        <begin position="6"/>
        <end position="47"/>
    </location>
</feature>
<gene>
    <name type="primary">VP1</name>
</gene>
<comment type="function">
    <text evidence="1">Self-assembles to form the virion icosahedral capsid with a T=1 symmetry. This very small capsid (25 nm in diameter) allows the virus to be very stable in the environment and resistant to some disinfectants, including detergents. Essential for the initial attachment to host receptors. After attachment, the virus is endocytosed and traffics to the nucleus. The capsid protein binds and transports the viral genome and Rep across the nuclear envelope (By similarity).</text>
</comment>
<comment type="subunit">
    <text evidence="1 3">Homomultimer (Potential). Interacts with Rep; this interaction relocates Rep into the nucleus (By similarity).</text>
</comment>
<comment type="subcellular location">
    <subcellularLocation>
        <location evidence="1">Host nucleus</location>
    </subcellularLocation>
    <subcellularLocation>
        <location evidence="3">Virion</location>
    </subcellularLocation>
</comment>
<comment type="induction">
    <text>VP1 and VP2 are detected 12 hours post infection, while VP3 only after 24 hours.</text>
</comment>
<comment type="similarity">
    <text evidence="3">Belongs to the gyrovirus capsid protein family.</text>
</comment>
<dbReference type="EMBL" id="L14767">
    <property type="protein sequence ID" value="AAD09424.1"/>
    <property type="molecule type" value="Genomic_DNA"/>
</dbReference>
<dbReference type="Proteomes" id="UP000008444">
    <property type="component" value="Genome"/>
</dbReference>
<dbReference type="GO" id="GO:0043657">
    <property type="term" value="C:host cell"/>
    <property type="evidence" value="ECO:0007669"/>
    <property type="project" value="GOC"/>
</dbReference>
<dbReference type="GO" id="GO:0042025">
    <property type="term" value="C:host cell nucleus"/>
    <property type="evidence" value="ECO:0007669"/>
    <property type="project" value="UniProtKB-SubCell"/>
</dbReference>
<dbReference type="GO" id="GO:0039615">
    <property type="term" value="C:T=1 icosahedral viral capsid"/>
    <property type="evidence" value="ECO:0007669"/>
    <property type="project" value="UniProtKB-KW"/>
</dbReference>
<dbReference type="GO" id="GO:0003677">
    <property type="term" value="F:DNA binding"/>
    <property type="evidence" value="ECO:0007669"/>
    <property type="project" value="UniProtKB-KW"/>
</dbReference>
<dbReference type="GO" id="GO:0075509">
    <property type="term" value="P:endocytosis involved in viral entry into host cell"/>
    <property type="evidence" value="ECO:0007669"/>
    <property type="project" value="UniProtKB-KW"/>
</dbReference>
<dbReference type="GO" id="GO:0075732">
    <property type="term" value="P:viral penetration into host nucleus"/>
    <property type="evidence" value="ECO:0007669"/>
    <property type="project" value="UniProtKB-KW"/>
</dbReference>
<dbReference type="GO" id="GO:0019062">
    <property type="term" value="P:virion attachment to host cell"/>
    <property type="evidence" value="ECO:0007669"/>
    <property type="project" value="UniProtKB-KW"/>
</dbReference>
<dbReference type="InterPro" id="IPR007291">
    <property type="entry name" value="Capsid_protein"/>
</dbReference>
<dbReference type="Pfam" id="PF04162">
    <property type="entry name" value="Gyro_capsid"/>
    <property type="match status" value="1"/>
</dbReference>
<protein>
    <recommendedName>
        <fullName>Capsid protein</fullName>
    </recommendedName>
    <alternativeName>
        <fullName>CA1</fullName>
    </alternativeName>
    <alternativeName>
        <fullName>Coat protein</fullName>
    </alternativeName>
</protein>
<sequence length="449" mass="51779">MARRARRPRGRFYAFRRGRWHNLKRLRRRYKFRHRRRQRYRRRAFRKAFHNPRPGTYSVRLPNPQSTMTIRFQGIIFLTEGLILPKNSTAGGYADHLYGARVAKISVNLKEFLLASMNLTYVSKIGGPIAGELIADGSQSQAAQNWPNCWLPLDNNVPSATPSAWWRWALMMMQPTDSCRFFNHPKQMTLQDMGRMFGGWHLFRHIETRFQLLATKNEGSFSPVASLLSQGEYLTRRDDVKYSSDHQNRWRKGEQPMTGGIAYATGKMRPDEQQYPAMPPDPPIITATTAQGTQVRCMNSTQAWWSWDTYMSFATLTALGAQWSFPPGQRSVSRRSFNHHKARGAGDPKGQRWHTLVPLGTETITDSYMSAPASELDTNFFTLYVAQGTNKSQQYKFGTATYALKEPVMKSDAWAVVRVQSVWQLGNRQRPYPWDVNWANSTMYWGSQP</sequence>
<organism>
    <name type="scientific">Chicken anemia virus (isolate USA CIA-1)</name>
    <name type="common">CAV</name>
    <dbReference type="NCBI Taxonomy" id="73478"/>
    <lineage>
        <taxon>Viruses</taxon>
        <taxon>Viruses incertae sedis</taxon>
        <taxon>Anelloviridae</taxon>
        <taxon>Gyrovirus</taxon>
        <taxon>Gyrovirus chickenanemia</taxon>
    </lineage>
</organism>
<organismHost>
    <name type="scientific">Gallus gallus</name>
    <name type="common">Chicken</name>
    <dbReference type="NCBI Taxonomy" id="9031"/>
</organismHost>
<name>CAPSD_CAVCI</name>
<accession>P54088</accession>
<proteinExistence type="evidence at transcript level"/>
<evidence type="ECO:0000250" key="1"/>
<evidence type="ECO:0000255" key="2"/>
<evidence type="ECO:0000305" key="3"/>
<reference key="1">
    <citation type="journal article" date="1996" name="J. Virol.">
        <title>A hypervariable region in VP1 of chicken infectious anemia virus mediates rate of spread and cell tropism in tissue culture.</title>
        <authorList>
            <person name="Renshaw R.W."/>
            <person name="Soine C."/>
            <person name="Weinkle T."/>
            <person name="O'Connell P.H."/>
            <person name="Ohashi K."/>
            <person name="Watson S."/>
            <person name="Lucio B."/>
            <person name="Harrington S."/>
            <person name="Schat K.A."/>
        </authorList>
    </citation>
    <scope>NUCLEOTIDE SEQUENCE [GENOMIC DNA]</scope>
</reference>
<reference key="2">
    <citation type="submission" date="1999-01" db="EMBL/GenBank/DDBJ databases">
        <authorList>
            <person name="Renshaw R.W."/>
        </authorList>
    </citation>
    <scope>SEQUENCE REVISION TO 447</scope>
</reference>